<accession>P62539</accession>
<accession>P33456</accession>
<dbReference type="EMBL" id="AL513383">
    <property type="protein sequence ID" value="CAD09735.1"/>
    <property type="molecule type" value="Genomic_DNA"/>
</dbReference>
<dbReference type="RefSeq" id="NP_058391.1">
    <property type="nucleotide sequence ID" value="NC_002305.1"/>
</dbReference>
<dbReference type="RefSeq" id="NP_569349.1">
    <property type="nucleotide sequence ID" value="NC_003384.1"/>
</dbReference>
<dbReference type="RefSeq" id="WP_000807689.1">
    <property type="nucleotide sequence ID" value="NZ_PJSB01000061.1"/>
</dbReference>
<dbReference type="SMR" id="P62539"/>
<dbReference type="KEGG" id="sty:HCM1.137"/>
<dbReference type="PATRIC" id="fig|220341.7.peg.5180"/>
<dbReference type="HOGENOM" id="CLU_047367_3_0_6"/>
<dbReference type="OMA" id="ETHDSEN"/>
<dbReference type="PRO" id="PR:P62539"/>
<dbReference type="Proteomes" id="UP000000541">
    <property type="component" value="Plasmid pHCM1"/>
</dbReference>
<dbReference type="GO" id="GO:0003887">
    <property type="term" value="F:DNA-directed DNA polymerase activity"/>
    <property type="evidence" value="ECO:0007669"/>
    <property type="project" value="InterPro"/>
</dbReference>
<dbReference type="GO" id="GO:0006270">
    <property type="term" value="P:DNA replication initiation"/>
    <property type="evidence" value="ECO:0007669"/>
    <property type="project" value="InterPro"/>
</dbReference>
<dbReference type="GO" id="GO:0006276">
    <property type="term" value="P:plasmid maintenance"/>
    <property type="evidence" value="ECO:0007669"/>
    <property type="project" value="UniProtKB-KW"/>
</dbReference>
<dbReference type="Gene3D" id="1.10.10.10">
    <property type="entry name" value="Winged helix-like DNA-binding domain superfamily/Winged helix DNA-binding domain"/>
    <property type="match status" value="2"/>
</dbReference>
<dbReference type="InterPro" id="IPR000525">
    <property type="entry name" value="Initiator_Rep_WH1"/>
</dbReference>
<dbReference type="InterPro" id="IPR036388">
    <property type="entry name" value="WH-like_DNA-bd_sf"/>
</dbReference>
<dbReference type="InterPro" id="IPR036390">
    <property type="entry name" value="WH_DNA-bd_sf"/>
</dbReference>
<dbReference type="NCBIfam" id="NF010305">
    <property type="entry name" value="PRK13742.1"/>
    <property type="match status" value="1"/>
</dbReference>
<dbReference type="Pfam" id="PF21205">
    <property type="entry name" value="Rep3_C"/>
    <property type="match status" value="1"/>
</dbReference>
<dbReference type="Pfam" id="PF01051">
    <property type="entry name" value="Rep3_N"/>
    <property type="match status" value="1"/>
</dbReference>
<dbReference type="SUPFAM" id="SSF46785">
    <property type="entry name" value="Winged helix' DNA-binding domain"/>
    <property type="match status" value="2"/>
</dbReference>
<keyword id="KW-0235">DNA replication</keyword>
<keyword id="KW-0614">Plasmid</keyword>
<keyword id="KW-0615">Plasmid copy control</keyword>
<feature type="chain" id="PRO_0000068299" description="Replication initiation protein">
    <location>
        <begin position="1"/>
        <end position="251"/>
    </location>
</feature>
<name>REPE2_SALTI</name>
<evidence type="ECO:0000305" key="1"/>
<protein>
    <recommendedName>
        <fullName>Replication initiation protein</fullName>
        <shortName>Protein E</shortName>
        <shortName>Protein rep</shortName>
    </recommendedName>
</protein>
<comment type="similarity">
    <text evidence="1">Belongs to the initiator RepB protein family.</text>
</comment>
<geneLocation type="plasmid">
    <name>pHCM1</name>
</geneLocation>
<sequence length="251" mass="29378">MAEIAVINHKKRKNSPRIVQSNELTEAAYSLSRDQKRLLYLFVHQIRKSDGSLQEHDGICEIHVAKYAETFGLTSAEASKDIRQALKGFAGKEVVFYRPEEDAGDEKGYESFPWFIKRAHSPSRGLYSVHINPYLIPFFIGLQNRFTQFRLSETKEITNPYAMRLYESLCQYRKPDGSGVVSLKIDWIMERYQLPQSYQRMPDFRRRFLKASVDEINSRTPMRLSYIEKKKGRQTTHIVFSFRDITSMTIE</sequence>
<reference key="1">
    <citation type="journal article" date="2001" name="Nature">
        <title>Complete genome sequence of a multiple drug resistant Salmonella enterica serovar Typhi CT18.</title>
        <authorList>
            <person name="Parkhill J."/>
            <person name="Dougan G."/>
            <person name="James K.D."/>
            <person name="Thomson N.R."/>
            <person name="Pickard D."/>
            <person name="Wain J."/>
            <person name="Churcher C.M."/>
            <person name="Mungall K.L."/>
            <person name="Bentley S.D."/>
            <person name="Holden M.T.G."/>
            <person name="Sebaihia M."/>
            <person name="Baker S."/>
            <person name="Basham D."/>
            <person name="Brooks K."/>
            <person name="Chillingworth T."/>
            <person name="Connerton P."/>
            <person name="Cronin A."/>
            <person name="Davis P."/>
            <person name="Davies R.M."/>
            <person name="Dowd L."/>
            <person name="White N."/>
            <person name="Farrar J."/>
            <person name="Feltwell T."/>
            <person name="Hamlin N."/>
            <person name="Haque A."/>
            <person name="Hien T.T."/>
            <person name="Holroyd S."/>
            <person name="Jagels K."/>
            <person name="Krogh A."/>
            <person name="Larsen T.S."/>
            <person name="Leather S."/>
            <person name="Moule S."/>
            <person name="O'Gaora P."/>
            <person name="Parry C."/>
            <person name="Quail M.A."/>
            <person name="Rutherford K.M."/>
            <person name="Simmonds M."/>
            <person name="Skelton J."/>
            <person name="Stevens K."/>
            <person name="Whitehead S."/>
            <person name="Barrell B.G."/>
        </authorList>
    </citation>
    <scope>NUCLEOTIDE SEQUENCE [LARGE SCALE GENOMIC DNA]</scope>
    <source>
        <strain>CT18</strain>
    </source>
</reference>
<organism>
    <name type="scientific">Salmonella typhi</name>
    <dbReference type="NCBI Taxonomy" id="90370"/>
    <lineage>
        <taxon>Bacteria</taxon>
        <taxon>Pseudomonadati</taxon>
        <taxon>Pseudomonadota</taxon>
        <taxon>Gammaproteobacteria</taxon>
        <taxon>Enterobacterales</taxon>
        <taxon>Enterobacteriaceae</taxon>
        <taxon>Salmonella</taxon>
    </lineage>
</organism>
<proteinExistence type="inferred from homology"/>
<gene>
    <name type="primary">repE</name>
    <name type="synonym">rep</name>
    <name type="ordered locus">HCM1.137</name>
</gene>